<evidence type="ECO:0000250" key="1">
    <source>
        <dbReference type="UniProtKB" id="Q8L3X8"/>
    </source>
</evidence>
<evidence type="ECO:0000255" key="2">
    <source>
        <dbReference type="PROSITE-ProRule" id="PRU00176"/>
    </source>
</evidence>
<evidence type="ECO:0000256" key="3">
    <source>
        <dbReference type="SAM" id="MobiDB-lite"/>
    </source>
</evidence>
<evidence type="ECO:0000269" key="4">
    <source>
    </source>
</evidence>
<evidence type="ECO:0000269" key="5">
    <source>
    </source>
</evidence>
<evidence type="ECO:0000269" key="6">
    <source>
    </source>
</evidence>
<evidence type="ECO:0000269" key="7">
    <source>
    </source>
</evidence>
<evidence type="ECO:0000269" key="8">
    <source>
    </source>
</evidence>
<evidence type="ECO:0000305" key="9"/>
<evidence type="ECO:0000305" key="10">
    <source>
    </source>
</evidence>
<evidence type="ECO:0007744" key="11">
    <source>
    </source>
</evidence>
<evidence type="ECO:0007744" key="12">
    <source>
    </source>
</evidence>
<accession>Q9FMG4</accession>
<sequence>MSHFGRSGPPDISDTYSLLVLNITFRTTADDLYPLFAKYGKVVDVFIPRDRRTGDSRGFAFVRYKYKDEAHKAVERLDGRVVDGREITVQFAKYGPNAEKISKGRVVEPPPKSRRSRSRSPRRSRSPRRSRSPPRRRSPRRSRSPRRRSRDDYREKDYRKRSRSRSYDRRERHEEKDRDHRRRTRSRSASPDEKRRVRGRYDNESRSHSRSLSASPARRSPRSSSPQKTSPAREVSPDKRSNERSPSPRRSLSPRSPALQKASPSKEMSPERRSNERSPSPGSPAPLRKVDAASRSQSPYAAE</sequence>
<comment type="function">
    <text evidence="8">Probably involved in intron recognition and spliceosome assembly, but not involved in alternative splicing regulation of the SCL33 intron.</text>
</comment>
<comment type="subunit">
    <text evidence="4 6 7">Component of the spliceosome. Interacts with SNRNP35, CYP59 and RS2Z33.</text>
</comment>
<comment type="subcellular location">
    <subcellularLocation>
        <location evidence="5">Nucleus speckle</location>
    </subcellularLocation>
</comment>
<comment type="disruption phenotype">
    <text evidence="8">No effect on SCL33 alternative splicing.</text>
</comment>
<comment type="miscellaneous">
    <text evidence="10">The splicing pattern of the pre-mRNA is regulated in a tissue-specific manner and by development, and changes in response to various types of abiotic stresses.</text>
</comment>
<comment type="similarity">
    <text evidence="9">Belongs to the splicing factor SR family. SC subfamily.</text>
</comment>
<keyword id="KW-0507">mRNA processing</keyword>
<keyword id="KW-0508">mRNA splicing</keyword>
<keyword id="KW-0539">Nucleus</keyword>
<keyword id="KW-0597">Phosphoprotein</keyword>
<keyword id="KW-1185">Reference proteome</keyword>
<keyword id="KW-0694">RNA-binding</keyword>
<keyword id="KW-0747">Spliceosome</keyword>
<proteinExistence type="evidence at protein level"/>
<protein>
    <recommendedName>
        <fullName>Serine/arginine-rich splicing factor SC35</fullName>
        <shortName>At-SC35</shortName>
        <shortName>AtSC35</shortName>
    </recommendedName>
    <alternativeName>
        <fullName>SC35-like splicing factor</fullName>
    </alternativeName>
</protein>
<feature type="chain" id="PRO_0000429603" description="Serine/arginine-rich splicing factor SC35">
    <location>
        <begin position="1"/>
        <end position="303"/>
    </location>
</feature>
<feature type="domain" description="RRM" evidence="2">
    <location>
        <begin position="16"/>
        <end position="94"/>
    </location>
</feature>
<feature type="region of interest" description="Disordered" evidence="3">
    <location>
        <begin position="100"/>
        <end position="303"/>
    </location>
</feature>
<feature type="compositionally biased region" description="Basic residues" evidence="3">
    <location>
        <begin position="112"/>
        <end position="148"/>
    </location>
</feature>
<feature type="compositionally biased region" description="Basic and acidic residues" evidence="3">
    <location>
        <begin position="149"/>
        <end position="158"/>
    </location>
</feature>
<feature type="compositionally biased region" description="Basic and acidic residues" evidence="3">
    <location>
        <begin position="165"/>
        <end position="178"/>
    </location>
</feature>
<feature type="compositionally biased region" description="Basic and acidic residues" evidence="3">
    <location>
        <begin position="190"/>
        <end position="207"/>
    </location>
</feature>
<feature type="compositionally biased region" description="Low complexity" evidence="3">
    <location>
        <begin position="210"/>
        <end position="226"/>
    </location>
</feature>
<feature type="compositionally biased region" description="Low complexity" evidence="3">
    <location>
        <begin position="244"/>
        <end position="257"/>
    </location>
</feature>
<feature type="compositionally biased region" description="Polar residues" evidence="3">
    <location>
        <begin position="294"/>
        <end position="303"/>
    </location>
</feature>
<feature type="modified residue" description="Phosphoserine" evidence="1">
    <location>
        <position position="7"/>
    </location>
</feature>
<feature type="modified residue" description="Phosphoserine" evidence="1">
    <location>
        <position position="186"/>
    </location>
</feature>
<feature type="modified residue" description="Phosphoserine" evidence="1">
    <location>
        <position position="188"/>
    </location>
</feature>
<feature type="modified residue" description="Phosphoserine" evidence="12">
    <location>
        <position position="251"/>
    </location>
</feature>
<feature type="modified residue" description="Phosphoserine" evidence="12">
    <location>
        <position position="253"/>
    </location>
</feature>
<feature type="modified residue" description="Phosphoserine" evidence="12">
    <location>
        <position position="256"/>
    </location>
</feature>
<feature type="modified residue" description="Phosphoserine" evidence="1">
    <location>
        <position position="263"/>
    </location>
</feature>
<feature type="modified residue" description="Phosphoserine" evidence="11">
    <location>
        <position position="278"/>
    </location>
</feature>
<feature type="modified residue" description="Phosphoserine" evidence="11">
    <location>
        <position position="280"/>
    </location>
</feature>
<feature type="modified residue" description="Phosphoserine" evidence="11">
    <location>
        <position position="283"/>
    </location>
</feature>
<feature type="modified residue" description="Phosphoserine" evidence="11">
    <location>
        <position position="296"/>
    </location>
</feature>
<feature type="modified residue" description="Phosphoserine" evidence="11">
    <location>
        <position position="298"/>
    </location>
</feature>
<organism>
    <name type="scientific">Arabidopsis thaliana</name>
    <name type="common">Mouse-ear cress</name>
    <dbReference type="NCBI Taxonomy" id="3702"/>
    <lineage>
        <taxon>Eukaryota</taxon>
        <taxon>Viridiplantae</taxon>
        <taxon>Streptophyta</taxon>
        <taxon>Embryophyta</taxon>
        <taxon>Tracheophyta</taxon>
        <taxon>Spermatophyta</taxon>
        <taxon>Magnoliopsida</taxon>
        <taxon>eudicotyledons</taxon>
        <taxon>Gunneridae</taxon>
        <taxon>Pentapetalae</taxon>
        <taxon>rosids</taxon>
        <taxon>malvids</taxon>
        <taxon>Brassicales</taxon>
        <taxon>Brassicaceae</taxon>
        <taxon>Camelineae</taxon>
        <taxon>Arabidopsis</taxon>
    </lineage>
</organism>
<name>SC35_ARATH</name>
<reference key="1">
    <citation type="journal article" date="1997" name="DNA Res.">
        <title>Structural analysis of Arabidopsis thaliana chromosome 5. III. Sequence features of the regions of 1,191,918 bp covered by seventeen physically assigned P1 clones.</title>
        <authorList>
            <person name="Nakamura Y."/>
            <person name="Sato S."/>
            <person name="Kaneko T."/>
            <person name="Kotani H."/>
            <person name="Asamizu E."/>
            <person name="Miyajima N."/>
            <person name="Tabata S."/>
        </authorList>
    </citation>
    <scope>NUCLEOTIDE SEQUENCE [LARGE SCALE GENOMIC DNA]</scope>
    <source>
        <strain>cv. Columbia</strain>
    </source>
</reference>
<reference key="2">
    <citation type="journal article" date="2017" name="Plant J.">
        <title>Araport11: a complete reannotation of the Arabidopsis thaliana reference genome.</title>
        <authorList>
            <person name="Cheng C.Y."/>
            <person name="Krishnakumar V."/>
            <person name="Chan A.P."/>
            <person name="Thibaud-Nissen F."/>
            <person name="Schobel S."/>
            <person name="Town C.D."/>
        </authorList>
    </citation>
    <scope>GENOME REANNOTATION</scope>
    <source>
        <strain>cv. Columbia</strain>
    </source>
</reference>
<reference key="3">
    <citation type="journal article" date="2003" name="Science">
        <title>Empirical analysis of transcriptional activity in the Arabidopsis genome.</title>
        <authorList>
            <person name="Yamada K."/>
            <person name="Lim J."/>
            <person name="Dale J.M."/>
            <person name="Chen H."/>
            <person name="Shinn P."/>
            <person name="Palm C.J."/>
            <person name="Southwick A.M."/>
            <person name="Wu H.C."/>
            <person name="Kim C.J."/>
            <person name="Nguyen M."/>
            <person name="Pham P.K."/>
            <person name="Cheuk R.F."/>
            <person name="Karlin-Newmann G."/>
            <person name="Liu S.X."/>
            <person name="Lam B."/>
            <person name="Sakano H."/>
            <person name="Wu T."/>
            <person name="Yu G."/>
            <person name="Miranda M."/>
            <person name="Quach H.L."/>
            <person name="Tripp M."/>
            <person name="Chang C.H."/>
            <person name="Lee J.M."/>
            <person name="Toriumi M.J."/>
            <person name="Chan M.M."/>
            <person name="Tang C.C."/>
            <person name="Onodera C.S."/>
            <person name="Deng J.M."/>
            <person name="Akiyama K."/>
            <person name="Ansari Y."/>
            <person name="Arakawa T."/>
            <person name="Banh J."/>
            <person name="Banno F."/>
            <person name="Bowser L."/>
            <person name="Brooks S.Y."/>
            <person name="Carninci P."/>
            <person name="Chao Q."/>
            <person name="Choy N."/>
            <person name="Enju A."/>
            <person name="Goldsmith A.D."/>
            <person name="Gurjal M."/>
            <person name="Hansen N.F."/>
            <person name="Hayashizaki Y."/>
            <person name="Johnson-Hopson C."/>
            <person name="Hsuan V.W."/>
            <person name="Iida K."/>
            <person name="Karnes M."/>
            <person name="Khan S."/>
            <person name="Koesema E."/>
            <person name="Ishida J."/>
            <person name="Jiang P.X."/>
            <person name="Jones T."/>
            <person name="Kawai J."/>
            <person name="Kamiya A."/>
            <person name="Meyers C."/>
            <person name="Nakajima M."/>
            <person name="Narusaka M."/>
            <person name="Seki M."/>
            <person name="Sakurai T."/>
            <person name="Satou M."/>
            <person name="Tamse R."/>
            <person name="Vaysberg M."/>
            <person name="Wallender E.K."/>
            <person name="Wong C."/>
            <person name="Yamamura Y."/>
            <person name="Yuan S."/>
            <person name="Shinozaki K."/>
            <person name="Davis R.W."/>
            <person name="Theologis A."/>
            <person name="Ecker J.R."/>
        </authorList>
    </citation>
    <scope>NUCLEOTIDE SEQUENCE [LARGE SCALE MRNA]</scope>
    <source>
        <strain>cv. Columbia</strain>
    </source>
</reference>
<reference key="4">
    <citation type="journal article" date="2002" name="J. Biol. Chem.">
        <title>Network of interactions of a novel plant-specific Arg/Ser-rich protein, atRSZ33, with atSC35-like splicing factors.</title>
        <authorList>
            <person name="Lopato S."/>
            <person name="Forstner C."/>
            <person name="Kalyna M."/>
            <person name="Hilscher J."/>
            <person name="Langhammer U."/>
            <person name="Korakod L."/>
            <person name="Zdravko J."/>
            <person name="Barta A."/>
        </authorList>
    </citation>
    <scope>INTERACTION WITH RS2Z33</scope>
</reference>
<reference key="5">
    <citation type="journal article" date="2004" name="Mol. Biol. Cell">
        <title>Use of fluorescent protein tags to study nuclear organization of the spliceosomal machinery in transiently transformed living plant cells.</title>
        <authorList>
            <person name="Lorkovic Z.J."/>
            <person name="Hilscher J."/>
            <person name="Barta A."/>
        </authorList>
    </citation>
    <scope>SUBCELLULAR LOCATION</scope>
</reference>
<reference key="6">
    <citation type="journal article" date="2005" name="RNA">
        <title>Evolutionary conservation of minor U12-type spliceosome between plants and humans.</title>
        <authorList>
            <person name="Lorkovic Z.J."/>
            <person name="Lehner R."/>
            <person name="Forstner C."/>
            <person name="Barta A."/>
        </authorList>
    </citation>
    <scope>INTERACTION WITH SNRNP35</scope>
</reference>
<reference key="7">
    <citation type="journal article" date="2006" name="Nucleic Acids Res.">
        <title>Phosphoproteomics reveals extensive in vivo phosphorylation of Arabidopsis proteins involved in RNA metabolism.</title>
        <authorList>
            <person name="de la Fuente van Bentem S."/>
            <person name="Anrather D."/>
            <person name="Roitinger E."/>
            <person name="Djamei A."/>
            <person name="Hufnagl T."/>
            <person name="Barta A."/>
            <person name="Csaszar E."/>
            <person name="Dohnal I."/>
            <person name="Lecourieux D."/>
            <person name="Hirt H."/>
        </authorList>
    </citation>
    <scope>PHOSPHORYLATION [LARGE SCALE ANALYSIS] AT SER-278; SER-280; SER-283; SER-296 AND SER-298</scope>
    <scope>IDENTIFICATION BY MASS SPECTROMETRY [LARGE SCALE ANALYSIS]</scope>
</reference>
<reference key="8">
    <citation type="journal article" date="2006" name="RNA">
        <title>AtCyp59 is a multidomain cyclophilin from Arabidopsis thaliana that interacts with SR proteins and the C-terminal domain of the RNA polymerase II.</title>
        <authorList>
            <person name="Gullerova M."/>
            <person name="Barta A."/>
            <person name="Lorkovic Z.J."/>
        </authorList>
    </citation>
    <scope>INTERACTION WITH CYP59</scope>
</reference>
<reference key="9">
    <citation type="journal article" date="2007" name="Plant J.">
        <title>Alternative splicing of pre-mRNAs of Arabidopsis serine/arginine-rich proteins: regulation by hormones and stresses.</title>
        <authorList>
            <person name="Palusa S.G."/>
            <person name="Ali G.S."/>
            <person name="Reddy A.S."/>
        </authorList>
    </citation>
    <scope>ALTERNATIVE SPLICING</scope>
    <scope>INDUCTION</scope>
</reference>
<reference key="10">
    <citation type="journal article" date="2008" name="J. Proteome Res.">
        <title>Site-specific phosphorylation profiling of Arabidopsis proteins by mass spectrometry and peptide chip analysis.</title>
        <authorList>
            <person name="de la Fuente van Bentem S."/>
            <person name="Anrather D."/>
            <person name="Dohnal I."/>
            <person name="Roitinger E."/>
            <person name="Csaszar E."/>
            <person name="Joore J."/>
            <person name="Buijnink J."/>
            <person name="Carreri A."/>
            <person name="Forzani C."/>
            <person name="Lorkovic Z.J."/>
            <person name="Barta A."/>
            <person name="Lecourieux D."/>
            <person name="Verhounig A."/>
            <person name="Jonak C."/>
            <person name="Hirt H."/>
        </authorList>
    </citation>
    <scope>PHOSPHORYLATION [LARGE SCALE ANALYSIS] AT SER-251; SER-253 AND SER-256</scope>
    <scope>IDENTIFICATION BY MASS SPECTROMETRY [LARGE SCALE ANALYSIS]</scope>
    <source>
        <tissue>Root</tissue>
    </source>
</reference>
<reference key="11">
    <citation type="journal article" date="2010" name="Plant Cell">
        <title>Implementing a rational and consistent nomenclature for serine/arginine-rich protein splicing factors (SR proteins) in plants.</title>
        <authorList>
            <person name="Barta A."/>
            <person name="Kalyna M."/>
            <person name="Reddy A.S."/>
        </authorList>
    </citation>
    <scope>GENE FAMILY</scope>
    <scope>NOMENCLATURE</scope>
</reference>
<reference key="12">
    <citation type="journal article" date="2011" name="PLoS ONE">
        <title>Comparative analysis of serine/arginine-rich proteins across 27 eukaryotes: insights into sub-family classification and extent of alternative splicing.</title>
        <authorList>
            <person name="Richardson D.N."/>
            <person name="Rogers M.F."/>
            <person name="Labadorf A."/>
            <person name="Ben-Hur A."/>
            <person name="Guo H."/>
            <person name="Paterson A.H."/>
            <person name="Reddy A.S.N."/>
        </authorList>
    </citation>
    <scope>GENE FAMILY</scope>
</reference>
<reference key="13">
    <citation type="journal article" date="2012" name="Plant J.">
        <title>Identification of an intronic splicing regulatory element involved in auto-regulation of alternative splicing of SCL33 pre-mRNA.</title>
        <authorList>
            <person name="Thomas J."/>
            <person name="Palusa S.G."/>
            <person name="Prasad K.V."/>
            <person name="Ali G.S."/>
            <person name="Surabhi G.K."/>
            <person name="Ben-Hur A."/>
            <person name="Abdel-Ghany S.E."/>
            <person name="Reddy A.S."/>
        </authorList>
    </citation>
    <scope>FUNCTION</scope>
    <scope>DISRUPTION PHENOTYPE</scope>
</reference>
<dbReference type="EMBL" id="AB008268">
    <property type="protein sequence ID" value="BAB09851.1"/>
    <property type="molecule type" value="Genomic_DNA"/>
</dbReference>
<dbReference type="EMBL" id="CP002688">
    <property type="protein sequence ID" value="AED97853.1"/>
    <property type="molecule type" value="Genomic_DNA"/>
</dbReference>
<dbReference type="EMBL" id="CP002688">
    <property type="protein sequence ID" value="AED97854.1"/>
    <property type="molecule type" value="Genomic_DNA"/>
</dbReference>
<dbReference type="EMBL" id="AY063890">
    <property type="protein sequence ID" value="AAL36246.1"/>
    <property type="molecule type" value="mRNA"/>
</dbReference>
<dbReference type="EMBL" id="AY122917">
    <property type="protein sequence ID" value="AAM67450.1"/>
    <property type="molecule type" value="mRNA"/>
</dbReference>
<dbReference type="EMBL" id="AY127004">
    <property type="protein sequence ID" value="AAM83231.1"/>
    <property type="molecule type" value="mRNA"/>
</dbReference>
<dbReference type="EMBL" id="AY143851">
    <property type="protein sequence ID" value="AAN28790.1"/>
    <property type="molecule type" value="mRNA"/>
</dbReference>
<dbReference type="RefSeq" id="NP_201225.1">
    <property type="nucleotide sequence ID" value="NM_125816.4"/>
</dbReference>
<dbReference type="RefSeq" id="NP_851261.1">
    <property type="nucleotide sequence ID" value="NM_180930.3"/>
</dbReference>
<dbReference type="SMR" id="Q9FMG4"/>
<dbReference type="BioGRID" id="21783">
    <property type="interactions" value="7"/>
</dbReference>
<dbReference type="FunCoup" id="Q9FMG4">
    <property type="interactions" value="1328"/>
</dbReference>
<dbReference type="STRING" id="3702.Q9FMG4"/>
<dbReference type="iPTMnet" id="Q9FMG4"/>
<dbReference type="PaxDb" id="3702-AT5G64200.2"/>
<dbReference type="ProteomicsDB" id="232843"/>
<dbReference type="EnsemblPlants" id="AT5G64200.1">
    <property type="protein sequence ID" value="AT5G64200.1"/>
    <property type="gene ID" value="AT5G64200"/>
</dbReference>
<dbReference type="EnsemblPlants" id="AT5G64200.2">
    <property type="protein sequence ID" value="AT5G64200.2"/>
    <property type="gene ID" value="AT5G64200"/>
</dbReference>
<dbReference type="GeneID" id="836541"/>
<dbReference type="Gramene" id="AT5G64200.1">
    <property type="protein sequence ID" value="AT5G64200.1"/>
    <property type="gene ID" value="AT5G64200"/>
</dbReference>
<dbReference type="Gramene" id="AT5G64200.2">
    <property type="protein sequence ID" value="AT5G64200.2"/>
    <property type="gene ID" value="AT5G64200"/>
</dbReference>
<dbReference type="KEGG" id="ath:AT5G64200"/>
<dbReference type="Araport" id="AT5G64200"/>
<dbReference type="TAIR" id="AT5G64200">
    <property type="gene designation" value="SC35"/>
</dbReference>
<dbReference type="eggNOG" id="KOG4207">
    <property type="taxonomic scope" value="Eukaryota"/>
</dbReference>
<dbReference type="HOGENOM" id="CLU_012062_10_0_1"/>
<dbReference type="InParanoid" id="Q9FMG4"/>
<dbReference type="OMA" id="PLIRCDV"/>
<dbReference type="OrthoDB" id="21467at2759"/>
<dbReference type="CD-CODE" id="4299E36E">
    <property type="entry name" value="Nucleolus"/>
</dbReference>
<dbReference type="PRO" id="PR:Q9FMG4"/>
<dbReference type="Proteomes" id="UP000006548">
    <property type="component" value="Chromosome 5"/>
</dbReference>
<dbReference type="ExpressionAtlas" id="Q9FMG4">
    <property type="expression patterns" value="baseline and differential"/>
</dbReference>
<dbReference type="GO" id="GO:0016607">
    <property type="term" value="C:nuclear speck"/>
    <property type="evidence" value="ECO:0000314"/>
    <property type="project" value="TAIR"/>
</dbReference>
<dbReference type="GO" id="GO:0005681">
    <property type="term" value="C:spliceosomal complex"/>
    <property type="evidence" value="ECO:0007669"/>
    <property type="project" value="UniProtKB-KW"/>
</dbReference>
<dbReference type="GO" id="GO:0003729">
    <property type="term" value="F:mRNA binding"/>
    <property type="evidence" value="ECO:0000314"/>
    <property type="project" value="TAIR"/>
</dbReference>
<dbReference type="GO" id="GO:0000398">
    <property type="term" value="P:mRNA splicing, via spliceosome"/>
    <property type="evidence" value="ECO:0000304"/>
    <property type="project" value="TAIR"/>
</dbReference>
<dbReference type="GO" id="GO:0008380">
    <property type="term" value="P:RNA splicing"/>
    <property type="evidence" value="ECO:0000303"/>
    <property type="project" value="TAIR"/>
</dbReference>
<dbReference type="CDD" id="cd12311">
    <property type="entry name" value="RRM_SRSF2_SRSF8"/>
    <property type="match status" value="1"/>
</dbReference>
<dbReference type="FunFam" id="3.30.70.330:FF:000192">
    <property type="entry name" value="Serine/arginine-rich splicing factor SC35"/>
    <property type="match status" value="1"/>
</dbReference>
<dbReference type="Gene3D" id="3.30.70.330">
    <property type="match status" value="1"/>
</dbReference>
<dbReference type="InterPro" id="IPR012677">
    <property type="entry name" value="Nucleotide-bd_a/b_plait_sf"/>
</dbReference>
<dbReference type="InterPro" id="IPR035979">
    <property type="entry name" value="RBD_domain_sf"/>
</dbReference>
<dbReference type="InterPro" id="IPR051106">
    <property type="entry name" value="RNA-bind/splicing_reg"/>
</dbReference>
<dbReference type="InterPro" id="IPR000504">
    <property type="entry name" value="RRM_dom"/>
</dbReference>
<dbReference type="InterPro" id="IPR003954">
    <property type="entry name" value="RRM_dom_euk"/>
</dbReference>
<dbReference type="PANTHER" id="PTHR48028">
    <property type="entry name" value="GLYCINE-RICH RNA-BINDING PROTEIN RZ1A"/>
    <property type="match status" value="1"/>
</dbReference>
<dbReference type="PANTHER" id="PTHR48028:SF4">
    <property type="entry name" value="SC35-LIKE SPLICING FACTOR"/>
    <property type="match status" value="1"/>
</dbReference>
<dbReference type="Pfam" id="PF00076">
    <property type="entry name" value="RRM_1"/>
    <property type="match status" value="1"/>
</dbReference>
<dbReference type="SMART" id="SM00360">
    <property type="entry name" value="RRM"/>
    <property type="match status" value="1"/>
</dbReference>
<dbReference type="SMART" id="SM00361">
    <property type="entry name" value="RRM_1"/>
    <property type="match status" value="1"/>
</dbReference>
<dbReference type="SUPFAM" id="SSF54928">
    <property type="entry name" value="RNA-binding domain, RBD"/>
    <property type="match status" value="1"/>
</dbReference>
<dbReference type="PROSITE" id="PS50102">
    <property type="entry name" value="RRM"/>
    <property type="match status" value="1"/>
</dbReference>
<gene>
    <name type="primary">SC35</name>
    <name type="ordered locus">At5g64200</name>
    <name type="ORF">MSJ1.4</name>
</gene>